<protein>
    <recommendedName>
        <fullName evidence="1">UPF0173 metal-dependent hydrolase RBAM_026340</fullName>
    </recommendedName>
</protein>
<comment type="similarity">
    <text evidence="1">Belongs to the UPF0173 family.</text>
</comment>
<keyword id="KW-0378">Hydrolase</keyword>
<accession>A7Z7L6</accession>
<evidence type="ECO:0000255" key="1">
    <source>
        <dbReference type="HAMAP-Rule" id="MF_00457"/>
    </source>
</evidence>
<reference key="1">
    <citation type="journal article" date="2007" name="Nat. Biotechnol.">
        <title>Comparative analysis of the complete genome sequence of the plant growth-promoting bacterium Bacillus amyloliquefaciens FZB42.</title>
        <authorList>
            <person name="Chen X.H."/>
            <person name="Koumoutsi A."/>
            <person name="Scholz R."/>
            <person name="Eisenreich A."/>
            <person name="Schneider K."/>
            <person name="Heinemeyer I."/>
            <person name="Morgenstern B."/>
            <person name="Voss B."/>
            <person name="Hess W.R."/>
            <person name="Reva O."/>
            <person name="Junge H."/>
            <person name="Voigt B."/>
            <person name="Jungblut P.R."/>
            <person name="Vater J."/>
            <person name="Suessmuth R."/>
            <person name="Liesegang H."/>
            <person name="Strittmatter A."/>
            <person name="Gottschalk G."/>
            <person name="Borriss R."/>
        </authorList>
    </citation>
    <scope>NUCLEOTIDE SEQUENCE [LARGE SCALE GENOMIC DNA]</scope>
    <source>
        <strain>DSM 23117 / BGSC 10A6 / LMG 26770 / FZB42</strain>
    </source>
</reference>
<gene>
    <name type="ordered locus">RBAM_026340</name>
</gene>
<organism>
    <name type="scientific">Bacillus velezensis (strain DSM 23117 / BGSC 10A6 / LMG 26770 / FZB42)</name>
    <name type="common">Bacillus amyloliquefaciens subsp. plantarum</name>
    <dbReference type="NCBI Taxonomy" id="326423"/>
    <lineage>
        <taxon>Bacteria</taxon>
        <taxon>Bacillati</taxon>
        <taxon>Bacillota</taxon>
        <taxon>Bacilli</taxon>
        <taxon>Bacillales</taxon>
        <taxon>Bacillaceae</taxon>
        <taxon>Bacillus</taxon>
        <taxon>Bacillus amyloliquefaciens group</taxon>
    </lineage>
</organism>
<proteinExistence type="inferred from homology"/>
<sequence>MKVTYHGHSVIQVETKTHNIIFDPFLTGNSLTNLKPEEVKADVILLTHGHNDHVGDTEQIAKQNDALVIAPNELAVYLGFKGLKVHPMHIGGARQFDFGKVKLTQAFHGSAVTDEENKTITYTGMPAGILLTIDGKTIFHAGDTALFSDMKLIGELNHIDLAFLPIGDNFTMGPEDAKLAAEWLRAKQVVPVHYNTFPVIEQDPDAFAESLPGGVGKVMAAGETIELA</sequence>
<name>Y2634_BACVZ</name>
<dbReference type="EMBL" id="CP000560">
    <property type="protein sequence ID" value="ABS74992.1"/>
    <property type="molecule type" value="Genomic_DNA"/>
</dbReference>
<dbReference type="RefSeq" id="WP_007613083.1">
    <property type="nucleotide sequence ID" value="NC_009725.2"/>
</dbReference>
<dbReference type="SMR" id="A7Z7L6"/>
<dbReference type="GeneID" id="93081777"/>
<dbReference type="KEGG" id="bay:RBAM_026340"/>
<dbReference type="HOGENOM" id="CLU_070010_4_1_9"/>
<dbReference type="Proteomes" id="UP000001120">
    <property type="component" value="Chromosome"/>
</dbReference>
<dbReference type="GO" id="GO:0016787">
    <property type="term" value="F:hydrolase activity"/>
    <property type="evidence" value="ECO:0007669"/>
    <property type="project" value="UniProtKB-UniRule"/>
</dbReference>
<dbReference type="Gene3D" id="3.60.15.10">
    <property type="entry name" value="Ribonuclease Z/Hydroxyacylglutathione hydrolase-like"/>
    <property type="match status" value="1"/>
</dbReference>
<dbReference type="HAMAP" id="MF_00457">
    <property type="entry name" value="UPF0173"/>
    <property type="match status" value="1"/>
</dbReference>
<dbReference type="InterPro" id="IPR001279">
    <property type="entry name" value="Metallo-B-lactamas"/>
</dbReference>
<dbReference type="InterPro" id="IPR036866">
    <property type="entry name" value="RibonucZ/Hydroxyglut_hydro"/>
</dbReference>
<dbReference type="InterPro" id="IPR022877">
    <property type="entry name" value="UPF0173"/>
</dbReference>
<dbReference type="NCBIfam" id="NF001911">
    <property type="entry name" value="PRK00685.1"/>
    <property type="match status" value="1"/>
</dbReference>
<dbReference type="PANTHER" id="PTHR39189">
    <property type="entry name" value="UPF0173 METAL-DEPENDENT HYDROLASE YTKL"/>
    <property type="match status" value="1"/>
</dbReference>
<dbReference type="PANTHER" id="PTHR39189:SF1">
    <property type="entry name" value="UPF0173 METAL-DEPENDENT HYDROLASE YTKL"/>
    <property type="match status" value="1"/>
</dbReference>
<dbReference type="Pfam" id="PF12706">
    <property type="entry name" value="Lactamase_B_2"/>
    <property type="match status" value="1"/>
</dbReference>
<dbReference type="SMART" id="SM00849">
    <property type="entry name" value="Lactamase_B"/>
    <property type="match status" value="1"/>
</dbReference>
<dbReference type="SUPFAM" id="SSF56281">
    <property type="entry name" value="Metallo-hydrolase/oxidoreductase"/>
    <property type="match status" value="1"/>
</dbReference>
<feature type="chain" id="PRO_1000081121" description="UPF0173 metal-dependent hydrolase RBAM_026340">
    <location>
        <begin position="1"/>
        <end position="228"/>
    </location>
</feature>